<keyword id="KW-0489">Methyltransferase</keyword>
<keyword id="KW-0949">S-adenosyl-L-methionine</keyword>
<keyword id="KW-0808">Transferase</keyword>
<keyword id="KW-0831">Ubiquinone biosynthesis</keyword>
<protein>
    <recommendedName>
        <fullName evidence="1">Ubiquinone biosynthesis O-methyltransferase</fullName>
    </recommendedName>
    <alternativeName>
        <fullName evidence="1">2-polyprenyl-6-hydroxyphenol methylase</fullName>
        <ecNumber evidence="1">2.1.1.222</ecNumber>
    </alternativeName>
    <alternativeName>
        <fullName evidence="1">3-demethylubiquinone 3-O-methyltransferase</fullName>
        <ecNumber evidence="1">2.1.1.64</ecNumber>
    </alternativeName>
</protein>
<evidence type="ECO:0000255" key="1">
    <source>
        <dbReference type="HAMAP-Rule" id="MF_00472"/>
    </source>
</evidence>
<organism>
    <name type="scientific">Shigella flexneri serotype 5b (strain 8401)</name>
    <dbReference type="NCBI Taxonomy" id="373384"/>
    <lineage>
        <taxon>Bacteria</taxon>
        <taxon>Pseudomonadati</taxon>
        <taxon>Pseudomonadota</taxon>
        <taxon>Gammaproteobacteria</taxon>
        <taxon>Enterobacterales</taxon>
        <taxon>Enterobacteriaceae</taxon>
        <taxon>Shigella</taxon>
    </lineage>
</organism>
<name>UBIG_SHIF8</name>
<proteinExistence type="inferred from homology"/>
<accession>Q0T2P9</accession>
<dbReference type="EC" id="2.1.1.222" evidence="1"/>
<dbReference type="EC" id="2.1.1.64" evidence="1"/>
<dbReference type="EMBL" id="CP000266">
    <property type="protein sequence ID" value="ABF04416.1"/>
    <property type="molecule type" value="Genomic_DNA"/>
</dbReference>
<dbReference type="RefSeq" id="WP_000990752.1">
    <property type="nucleotide sequence ID" value="NC_008258.1"/>
</dbReference>
<dbReference type="SMR" id="Q0T2P9"/>
<dbReference type="GeneID" id="93774945"/>
<dbReference type="KEGG" id="sfv:SFV_2303"/>
<dbReference type="HOGENOM" id="CLU_042432_5_0_6"/>
<dbReference type="UniPathway" id="UPA00232"/>
<dbReference type="Proteomes" id="UP000000659">
    <property type="component" value="Chromosome"/>
</dbReference>
<dbReference type="GO" id="GO:0102208">
    <property type="term" value="F:2-polyprenyl-6-hydroxyphenol methylase activity"/>
    <property type="evidence" value="ECO:0007669"/>
    <property type="project" value="UniProtKB-EC"/>
</dbReference>
<dbReference type="GO" id="GO:0061542">
    <property type="term" value="F:3-demethylubiquinol 3-O-methyltransferase activity"/>
    <property type="evidence" value="ECO:0007669"/>
    <property type="project" value="UniProtKB-UniRule"/>
</dbReference>
<dbReference type="GO" id="GO:0010420">
    <property type="term" value="F:polyprenyldihydroxybenzoate methyltransferase activity"/>
    <property type="evidence" value="ECO:0007669"/>
    <property type="project" value="InterPro"/>
</dbReference>
<dbReference type="GO" id="GO:0032259">
    <property type="term" value="P:methylation"/>
    <property type="evidence" value="ECO:0007669"/>
    <property type="project" value="UniProtKB-KW"/>
</dbReference>
<dbReference type="CDD" id="cd02440">
    <property type="entry name" value="AdoMet_MTases"/>
    <property type="match status" value="1"/>
</dbReference>
<dbReference type="FunFam" id="3.40.50.150:FF:000028">
    <property type="entry name" value="Ubiquinone biosynthesis O-methyltransferase"/>
    <property type="match status" value="1"/>
</dbReference>
<dbReference type="Gene3D" id="3.40.50.150">
    <property type="entry name" value="Vaccinia Virus protein VP39"/>
    <property type="match status" value="1"/>
</dbReference>
<dbReference type="HAMAP" id="MF_00472">
    <property type="entry name" value="UbiG"/>
    <property type="match status" value="1"/>
</dbReference>
<dbReference type="InterPro" id="IPR029063">
    <property type="entry name" value="SAM-dependent_MTases_sf"/>
</dbReference>
<dbReference type="InterPro" id="IPR010233">
    <property type="entry name" value="UbiG_MeTrfase"/>
</dbReference>
<dbReference type="NCBIfam" id="TIGR01983">
    <property type="entry name" value="UbiG"/>
    <property type="match status" value="1"/>
</dbReference>
<dbReference type="PANTHER" id="PTHR43464">
    <property type="entry name" value="METHYLTRANSFERASE"/>
    <property type="match status" value="1"/>
</dbReference>
<dbReference type="PANTHER" id="PTHR43464:SF19">
    <property type="entry name" value="UBIQUINONE BIOSYNTHESIS O-METHYLTRANSFERASE, MITOCHONDRIAL"/>
    <property type="match status" value="1"/>
</dbReference>
<dbReference type="Pfam" id="PF13489">
    <property type="entry name" value="Methyltransf_23"/>
    <property type="match status" value="1"/>
</dbReference>
<dbReference type="SUPFAM" id="SSF53335">
    <property type="entry name" value="S-adenosyl-L-methionine-dependent methyltransferases"/>
    <property type="match status" value="1"/>
</dbReference>
<feature type="chain" id="PRO_1000013928" description="Ubiquinone biosynthesis O-methyltransferase">
    <location>
        <begin position="1"/>
        <end position="240"/>
    </location>
</feature>
<feature type="binding site" evidence="1">
    <location>
        <position position="44"/>
    </location>
    <ligand>
        <name>S-adenosyl-L-methionine</name>
        <dbReference type="ChEBI" id="CHEBI:59789"/>
    </ligand>
</feature>
<feature type="binding site" evidence="1">
    <location>
        <position position="64"/>
    </location>
    <ligand>
        <name>S-adenosyl-L-methionine</name>
        <dbReference type="ChEBI" id="CHEBI:59789"/>
    </ligand>
</feature>
<feature type="binding site" evidence="1">
    <location>
        <position position="85"/>
    </location>
    <ligand>
        <name>S-adenosyl-L-methionine</name>
        <dbReference type="ChEBI" id="CHEBI:59789"/>
    </ligand>
</feature>
<feature type="binding site" evidence="1">
    <location>
        <position position="129"/>
    </location>
    <ligand>
        <name>S-adenosyl-L-methionine</name>
        <dbReference type="ChEBI" id="CHEBI:59789"/>
    </ligand>
</feature>
<sequence length="240" mass="26571">MNAEKSPENHNVDHEEIAKFEAVASRWWDLEGEFKPLHRINPLRLGYIAERAGGLFGKKVLDVGCGGGILAESMAREGATVTGLDMGFEPLQVAKLHALESGIQVDYVQETVEEHAAKHAGQYDVVTCMEMLEHVPDPQSVVRACAQLVKPGGDVFFSTLNRNGKSWLMAVVGAEYILRMVPKGTHDVKKFIKPAELLGWVDQTSLKERHITGLHYNPITNSFKLGPGVDVNYMLHTQNK</sequence>
<comment type="function">
    <text evidence="1">O-methyltransferase that catalyzes the 2 O-methylation steps in the ubiquinone biosynthetic pathway.</text>
</comment>
<comment type="catalytic activity">
    <reaction evidence="1">
        <text>a 3-demethylubiquinol + S-adenosyl-L-methionine = a ubiquinol + S-adenosyl-L-homocysteine + H(+)</text>
        <dbReference type="Rhea" id="RHEA:44380"/>
        <dbReference type="Rhea" id="RHEA-COMP:9566"/>
        <dbReference type="Rhea" id="RHEA-COMP:10914"/>
        <dbReference type="ChEBI" id="CHEBI:15378"/>
        <dbReference type="ChEBI" id="CHEBI:17976"/>
        <dbReference type="ChEBI" id="CHEBI:57856"/>
        <dbReference type="ChEBI" id="CHEBI:59789"/>
        <dbReference type="ChEBI" id="CHEBI:84422"/>
        <dbReference type="EC" id="2.1.1.64"/>
    </reaction>
</comment>
<comment type="catalytic activity">
    <reaction evidence="1">
        <text>a 3-(all-trans-polyprenyl)benzene-1,2-diol + S-adenosyl-L-methionine = a 2-methoxy-6-(all-trans-polyprenyl)phenol + S-adenosyl-L-homocysteine + H(+)</text>
        <dbReference type="Rhea" id="RHEA:31411"/>
        <dbReference type="Rhea" id="RHEA-COMP:9550"/>
        <dbReference type="Rhea" id="RHEA-COMP:9551"/>
        <dbReference type="ChEBI" id="CHEBI:15378"/>
        <dbReference type="ChEBI" id="CHEBI:57856"/>
        <dbReference type="ChEBI" id="CHEBI:59789"/>
        <dbReference type="ChEBI" id="CHEBI:62729"/>
        <dbReference type="ChEBI" id="CHEBI:62731"/>
        <dbReference type="EC" id="2.1.1.222"/>
    </reaction>
</comment>
<comment type="pathway">
    <text evidence="1">Cofactor biosynthesis; ubiquinone biosynthesis.</text>
</comment>
<comment type="similarity">
    <text evidence="1">Belongs to the methyltransferase superfamily. UbiG/COQ3 family.</text>
</comment>
<reference key="1">
    <citation type="journal article" date="2006" name="BMC Genomics">
        <title>Complete genome sequence of Shigella flexneri 5b and comparison with Shigella flexneri 2a.</title>
        <authorList>
            <person name="Nie H."/>
            <person name="Yang F."/>
            <person name="Zhang X."/>
            <person name="Yang J."/>
            <person name="Chen L."/>
            <person name="Wang J."/>
            <person name="Xiong Z."/>
            <person name="Peng J."/>
            <person name="Sun L."/>
            <person name="Dong J."/>
            <person name="Xue Y."/>
            <person name="Xu X."/>
            <person name="Chen S."/>
            <person name="Yao Z."/>
            <person name="Shen Y."/>
            <person name="Jin Q."/>
        </authorList>
    </citation>
    <scope>NUCLEOTIDE SEQUENCE [LARGE SCALE GENOMIC DNA]</scope>
    <source>
        <strain>8401</strain>
    </source>
</reference>
<gene>
    <name evidence="1" type="primary">ubiG</name>
    <name type="ordered locus">SFV_2303</name>
</gene>